<proteinExistence type="evidence at transcript level"/>
<reference key="1">
    <citation type="submission" date="2004-11" db="EMBL/GenBank/DDBJ databases">
        <authorList>
            <consortium name="The German cDNA consortium"/>
        </authorList>
    </citation>
    <scope>NUCLEOTIDE SEQUENCE [LARGE SCALE MRNA]</scope>
    <source>
        <tissue>Brain cortex</tissue>
    </source>
</reference>
<organism>
    <name type="scientific">Pongo abelii</name>
    <name type="common">Sumatran orangutan</name>
    <name type="synonym">Pongo pygmaeus abelii</name>
    <dbReference type="NCBI Taxonomy" id="9601"/>
    <lineage>
        <taxon>Eukaryota</taxon>
        <taxon>Metazoa</taxon>
        <taxon>Chordata</taxon>
        <taxon>Craniata</taxon>
        <taxon>Vertebrata</taxon>
        <taxon>Euteleostomi</taxon>
        <taxon>Mammalia</taxon>
        <taxon>Eutheria</taxon>
        <taxon>Euarchontoglires</taxon>
        <taxon>Primates</taxon>
        <taxon>Haplorrhini</taxon>
        <taxon>Catarrhini</taxon>
        <taxon>Hominidae</taxon>
        <taxon>Pongo</taxon>
    </lineage>
</organism>
<dbReference type="EMBL" id="CR859613">
    <property type="protein sequence ID" value="CAH91776.1"/>
    <property type="molecule type" value="mRNA"/>
</dbReference>
<dbReference type="RefSeq" id="NP_001126029.1">
    <property type="nucleotide sequence ID" value="NM_001132557.1"/>
</dbReference>
<dbReference type="SMR" id="Q5R8Y4"/>
<dbReference type="FunCoup" id="Q5R8Y4">
    <property type="interactions" value="59"/>
</dbReference>
<dbReference type="GlyCosmos" id="Q5R8Y4">
    <property type="glycosylation" value="3 sites, No reported glycans"/>
</dbReference>
<dbReference type="Ensembl" id="ENSPPYT00000004066.3">
    <property type="protein sequence ID" value="ENSPPYP00000003918.3"/>
    <property type="gene ID" value="ENSPPYG00000003413.3"/>
</dbReference>
<dbReference type="GeneID" id="100172977"/>
<dbReference type="KEGG" id="pon:100172977"/>
<dbReference type="CTD" id="338645"/>
<dbReference type="eggNOG" id="ENOG502QV95">
    <property type="taxonomic scope" value="Eukaryota"/>
</dbReference>
<dbReference type="GeneTree" id="ENSGT00390000013180"/>
<dbReference type="InParanoid" id="Q5R8Y4"/>
<dbReference type="OMA" id="EGKTCSM"/>
<dbReference type="OrthoDB" id="8767066at2759"/>
<dbReference type="Proteomes" id="UP000001595">
    <property type="component" value="Chromosome 11"/>
</dbReference>
<dbReference type="GO" id="GO:0005576">
    <property type="term" value="C:extracellular region"/>
    <property type="evidence" value="ECO:0007669"/>
    <property type="project" value="UniProtKB-SubCell"/>
</dbReference>
<dbReference type="InterPro" id="IPR026718">
    <property type="entry name" value="Luzp2"/>
</dbReference>
<dbReference type="PANTHER" id="PTHR22414">
    <property type="entry name" value="LEUCINE ZIPPER PROTEIN 2"/>
    <property type="match status" value="1"/>
</dbReference>
<dbReference type="PANTHER" id="PTHR22414:SF0">
    <property type="entry name" value="LEUCINE ZIPPER PROTEIN 2"/>
    <property type="match status" value="1"/>
</dbReference>
<sequence length="346" mass="38830">MKFSPAHYLLPLLPALVLSTRQDYEELEKQLKEVFKERSTILRQLTKTSRELDGIKVSLQSLKNDEHSAKIDVQKLLELGQKQREEMKSLQEALQNQLKETSEKAEKHQATINFLKTEVERKSKMIRDLQNENKSLKNKLLSGNKLCGIHAEESKKIQAQLKELRYGKKDLLFKAQQLTDLEQKLAVAKNELEKAALDRESQMKAMKETVQLCLTSVFRDQPPPALSLITSNPTQMLLPPRNSASKLPDAAAKSKPQQSASGNNESSQVESTKEGSPSTTACDSQDEGRTCSIKHKESPPSNATAETKPIPQKLQMPPCSECEVKKAPEKPLTSFEGMAAREEKIL</sequence>
<keyword id="KW-0175">Coiled coil</keyword>
<keyword id="KW-0325">Glycoprotein</keyword>
<keyword id="KW-1185">Reference proteome</keyword>
<keyword id="KW-0964">Secreted</keyword>
<keyword id="KW-0732">Signal</keyword>
<evidence type="ECO:0000255" key="1"/>
<evidence type="ECO:0000256" key="2">
    <source>
        <dbReference type="SAM" id="MobiDB-lite"/>
    </source>
</evidence>
<evidence type="ECO:0000305" key="3"/>
<accession>Q5R8Y4</accession>
<comment type="subcellular location">
    <subcellularLocation>
        <location evidence="3">Secreted</location>
    </subcellularLocation>
</comment>
<gene>
    <name type="primary">LUZP2</name>
</gene>
<feature type="signal peptide" evidence="1">
    <location>
        <begin position="1"/>
        <end position="19"/>
    </location>
</feature>
<feature type="chain" id="PRO_0000315276" description="Leucine zipper protein 2">
    <location>
        <begin position="20"/>
        <end position="346"/>
    </location>
</feature>
<feature type="region of interest" description="Leucine-zipper">
    <location>
        <begin position="164"/>
        <end position="192"/>
    </location>
</feature>
<feature type="region of interest" description="Disordered" evidence="2">
    <location>
        <begin position="225"/>
        <end position="346"/>
    </location>
</feature>
<feature type="coiled-coil region" evidence="1">
    <location>
        <begin position="16"/>
        <end position="211"/>
    </location>
</feature>
<feature type="compositionally biased region" description="Low complexity" evidence="2">
    <location>
        <begin position="250"/>
        <end position="261"/>
    </location>
</feature>
<feature type="compositionally biased region" description="Polar residues" evidence="2">
    <location>
        <begin position="262"/>
        <end position="283"/>
    </location>
</feature>
<feature type="compositionally biased region" description="Basic and acidic residues" evidence="2">
    <location>
        <begin position="286"/>
        <end position="298"/>
    </location>
</feature>
<feature type="glycosylation site" description="N-linked (GlcNAc...) asparagine" evidence="1">
    <location>
        <position position="133"/>
    </location>
</feature>
<feature type="glycosylation site" description="N-linked (GlcNAc...) asparagine" evidence="1">
    <location>
        <position position="264"/>
    </location>
</feature>
<feature type="glycosylation site" description="N-linked (GlcNAc...) asparagine" evidence="1">
    <location>
        <position position="302"/>
    </location>
</feature>
<name>LUZP2_PONAB</name>
<protein>
    <recommendedName>
        <fullName>Leucine zipper protein 2</fullName>
    </recommendedName>
</protein>